<feature type="chain" id="PRO_0000203076" description="Putative uncharacterized protein YJL015C">
    <location>
        <begin position="1"/>
        <end position="94"/>
    </location>
</feature>
<accession>P47073</accession>
<sequence>MRHVKRKSLVLGWKYIISHKIISGYIWLYRNCTTNIYTVCKFLRCGYICEELCNGRSTCDDRTFAHRTFVFMGVYLQLIHHISRFRTNIAFITQ</sequence>
<evidence type="ECO:0000305" key="1"/>
<evidence type="ECO:0000305" key="2">
    <source>
    </source>
</evidence>
<organism>
    <name type="scientific">Saccharomyces cerevisiae (strain ATCC 204508 / S288c)</name>
    <name type="common">Baker's yeast</name>
    <dbReference type="NCBI Taxonomy" id="559292"/>
    <lineage>
        <taxon>Eukaryota</taxon>
        <taxon>Fungi</taxon>
        <taxon>Dikarya</taxon>
        <taxon>Ascomycota</taxon>
        <taxon>Saccharomycotina</taxon>
        <taxon>Saccharomycetes</taxon>
        <taxon>Saccharomycetales</taxon>
        <taxon>Saccharomycetaceae</taxon>
        <taxon>Saccharomyces</taxon>
    </lineage>
</organism>
<gene>
    <name type="ordered locus">YJL015C</name>
    <name type="ORF">J1331</name>
</gene>
<proteinExistence type="uncertain"/>
<name>YJB5_YEAST</name>
<comment type="miscellaneous">
    <text evidence="1">Partially overlaps YJL016W/YJL017W.</text>
</comment>
<comment type="caution">
    <text evidence="2">Product of a dubious gene prediction unlikely to encode a functional protein. Because of that it is not part of the S.cerevisiae S288c complete/reference proteome set.</text>
</comment>
<comment type="sequence caution" evidence="1">
    <conflict type="erroneous initiation">
        <sequence resource="EMBL-CDS" id="CAA89307"/>
    </conflict>
    <text>Extended N-terminus.</text>
</comment>
<dbReference type="EMBL" id="Z49291">
    <property type="protein sequence ID" value="CAA89307.1"/>
    <property type="status" value="ALT_INIT"/>
    <property type="molecule type" value="Genomic_DNA"/>
</dbReference>
<dbReference type="PIR" id="S56786">
    <property type="entry name" value="S56786"/>
</dbReference>
<dbReference type="DIP" id="DIP-4573N"/>
<dbReference type="STRING" id="4932.YJL015C"/>
<dbReference type="PaxDb" id="4932-YJL015C"/>
<dbReference type="EnsemblFungi" id="YJL015C_mRNA">
    <property type="protein sequence ID" value="YJL015C"/>
    <property type="gene ID" value="YJL015C"/>
</dbReference>
<dbReference type="AGR" id="SGD:S000003552"/>
<dbReference type="SGD" id="S000003552">
    <property type="gene designation" value="YJL015C"/>
</dbReference>
<dbReference type="HOGENOM" id="CLU_2387872_0_0_1"/>
<reference key="1">
    <citation type="journal article" date="1996" name="EMBO J.">
        <title>Complete nucleotide sequence of Saccharomyces cerevisiae chromosome X.</title>
        <authorList>
            <person name="Galibert F."/>
            <person name="Alexandraki D."/>
            <person name="Baur A."/>
            <person name="Boles E."/>
            <person name="Chalwatzis N."/>
            <person name="Chuat J.-C."/>
            <person name="Coster F."/>
            <person name="Cziepluch C."/>
            <person name="de Haan M."/>
            <person name="Domdey H."/>
            <person name="Durand P."/>
            <person name="Entian K.-D."/>
            <person name="Gatius M."/>
            <person name="Goffeau A."/>
            <person name="Grivell L.A."/>
            <person name="Hennemann A."/>
            <person name="Herbert C.J."/>
            <person name="Heumann K."/>
            <person name="Hilger F."/>
            <person name="Hollenberg C.P."/>
            <person name="Huang M.-E."/>
            <person name="Jacq C."/>
            <person name="Jauniaux J.-C."/>
            <person name="Katsoulou C."/>
            <person name="Kirchrath L."/>
            <person name="Kleine K."/>
            <person name="Kordes E."/>
            <person name="Koetter P."/>
            <person name="Liebl S."/>
            <person name="Louis E.J."/>
            <person name="Manus V."/>
            <person name="Mewes H.-W."/>
            <person name="Miosga T."/>
            <person name="Obermaier B."/>
            <person name="Perea J."/>
            <person name="Pohl T.M."/>
            <person name="Portetelle D."/>
            <person name="Pujol A."/>
            <person name="Purnelle B."/>
            <person name="Ramezani Rad M."/>
            <person name="Rasmussen S.W."/>
            <person name="Rose M."/>
            <person name="Rossau R."/>
            <person name="Schaaff-Gerstenschlaeger I."/>
            <person name="Smits P.H.M."/>
            <person name="Scarcez T."/>
            <person name="Soriano N."/>
            <person name="To Van D."/>
            <person name="Tzermia M."/>
            <person name="Van Broekhoven A."/>
            <person name="Vandenbol M."/>
            <person name="Wedler H."/>
            <person name="von Wettstein D."/>
            <person name="Wambutt R."/>
            <person name="Zagulski M."/>
            <person name="Zollner A."/>
            <person name="Karpfinger-Hartl L."/>
        </authorList>
    </citation>
    <scope>NUCLEOTIDE SEQUENCE [LARGE SCALE GENOMIC DNA]</scope>
    <source>
        <strain>ATCC 204508 / S288c</strain>
    </source>
</reference>
<reference key="2">
    <citation type="journal article" date="2014" name="G3 (Bethesda)">
        <title>The reference genome sequence of Saccharomyces cerevisiae: Then and now.</title>
        <authorList>
            <person name="Engel S.R."/>
            <person name="Dietrich F.S."/>
            <person name="Fisk D.G."/>
            <person name="Binkley G."/>
            <person name="Balakrishnan R."/>
            <person name="Costanzo M.C."/>
            <person name="Dwight S.S."/>
            <person name="Hitz B.C."/>
            <person name="Karra K."/>
            <person name="Nash R.S."/>
            <person name="Weng S."/>
            <person name="Wong E.D."/>
            <person name="Lloyd P."/>
            <person name="Skrzypek M.S."/>
            <person name="Miyasato S.R."/>
            <person name="Simison M."/>
            <person name="Cherry J.M."/>
        </authorList>
    </citation>
    <scope>GENOME REANNOTATION</scope>
    <scope>SEQUENCE REVISION TO N-TERMINUS</scope>
    <source>
        <strain>ATCC 204508 / S288c</strain>
    </source>
</reference>
<protein>
    <recommendedName>
        <fullName>Putative uncharacterized protein YJL015C</fullName>
    </recommendedName>
</protein>